<name>COAX_NITV4</name>
<sequence length="262" mass="28014">MARHLLLFDIGNTNVKVGIATEGTVLTSYALPTDGTQTGDGFGLALLDIMRHAGLGADDIDACVGSSVVPSLDPLLRHACERFLWRPLQLAHVDLPVPLENRYERPTEVGADRLVAAFAARRLYPDARALVSVDFGTATTFDCVDGDAYLGGLICPGVLSSAGALSSRTAKLPRVSLEVSEDMPVVGRSTTTSLNHGFIFGFAALAEGVTARLRKVLPEPLEVVATGGFARAVARVSDCFDHVRPDLLLEGLRLLYLESEQR</sequence>
<proteinExistence type="inferred from homology"/>
<comment type="function">
    <text evidence="1">Catalyzes the phosphorylation of pantothenate (Pan), the first step in CoA biosynthesis.</text>
</comment>
<comment type="catalytic activity">
    <reaction evidence="1">
        <text>(R)-pantothenate + ATP = (R)-4'-phosphopantothenate + ADP + H(+)</text>
        <dbReference type="Rhea" id="RHEA:16373"/>
        <dbReference type="ChEBI" id="CHEBI:10986"/>
        <dbReference type="ChEBI" id="CHEBI:15378"/>
        <dbReference type="ChEBI" id="CHEBI:29032"/>
        <dbReference type="ChEBI" id="CHEBI:30616"/>
        <dbReference type="ChEBI" id="CHEBI:456216"/>
        <dbReference type="EC" id="2.7.1.33"/>
    </reaction>
</comment>
<comment type="cofactor">
    <cofactor evidence="1">
        <name>NH4(+)</name>
        <dbReference type="ChEBI" id="CHEBI:28938"/>
    </cofactor>
    <cofactor evidence="1">
        <name>K(+)</name>
        <dbReference type="ChEBI" id="CHEBI:29103"/>
    </cofactor>
    <text evidence="1">A monovalent cation. Ammonium or potassium.</text>
</comment>
<comment type="pathway">
    <text evidence="1">Cofactor biosynthesis; coenzyme A biosynthesis; CoA from (R)-pantothenate: step 1/5.</text>
</comment>
<comment type="subunit">
    <text evidence="1">Homodimer.</text>
</comment>
<comment type="subcellular location">
    <subcellularLocation>
        <location evidence="1">Cytoplasm</location>
    </subcellularLocation>
</comment>
<comment type="similarity">
    <text evidence="1">Belongs to the type III pantothenate kinase family.</text>
</comment>
<dbReference type="EC" id="2.7.1.33" evidence="1"/>
<dbReference type="EMBL" id="CP000527">
    <property type="protein sequence ID" value="ABM29672.1"/>
    <property type="molecule type" value="Genomic_DNA"/>
</dbReference>
<dbReference type="RefSeq" id="WP_010937628.1">
    <property type="nucleotide sequence ID" value="NC_008751.1"/>
</dbReference>
<dbReference type="SMR" id="A1VGV6"/>
<dbReference type="KEGG" id="dvl:Dvul_2660"/>
<dbReference type="HOGENOM" id="CLU_066627_1_0_7"/>
<dbReference type="UniPathway" id="UPA00241">
    <property type="reaction ID" value="UER00352"/>
</dbReference>
<dbReference type="Proteomes" id="UP000009173">
    <property type="component" value="Chromosome"/>
</dbReference>
<dbReference type="GO" id="GO:0005737">
    <property type="term" value="C:cytoplasm"/>
    <property type="evidence" value="ECO:0007669"/>
    <property type="project" value="UniProtKB-SubCell"/>
</dbReference>
<dbReference type="GO" id="GO:0005524">
    <property type="term" value="F:ATP binding"/>
    <property type="evidence" value="ECO:0007669"/>
    <property type="project" value="UniProtKB-UniRule"/>
</dbReference>
<dbReference type="GO" id="GO:0046872">
    <property type="term" value="F:metal ion binding"/>
    <property type="evidence" value="ECO:0007669"/>
    <property type="project" value="UniProtKB-KW"/>
</dbReference>
<dbReference type="GO" id="GO:0004594">
    <property type="term" value="F:pantothenate kinase activity"/>
    <property type="evidence" value="ECO:0007669"/>
    <property type="project" value="UniProtKB-UniRule"/>
</dbReference>
<dbReference type="GO" id="GO:0015937">
    <property type="term" value="P:coenzyme A biosynthetic process"/>
    <property type="evidence" value="ECO:0007669"/>
    <property type="project" value="UniProtKB-UniRule"/>
</dbReference>
<dbReference type="CDD" id="cd24015">
    <property type="entry name" value="ASKHA_NBD_PanK-III"/>
    <property type="match status" value="1"/>
</dbReference>
<dbReference type="Gene3D" id="3.30.420.40">
    <property type="match status" value="2"/>
</dbReference>
<dbReference type="HAMAP" id="MF_01274">
    <property type="entry name" value="Pantothen_kinase_3"/>
    <property type="match status" value="1"/>
</dbReference>
<dbReference type="InterPro" id="IPR043129">
    <property type="entry name" value="ATPase_NBD"/>
</dbReference>
<dbReference type="InterPro" id="IPR004619">
    <property type="entry name" value="Type_III_PanK"/>
</dbReference>
<dbReference type="NCBIfam" id="TIGR00671">
    <property type="entry name" value="baf"/>
    <property type="match status" value="1"/>
</dbReference>
<dbReference type="NCBIfam" id="NF009855">
    <property type="entry name" value="PRK13321.1"/>
    <property type="match status" value="1"/>
</dbReference>
<dbReference type="PANTHER" id="PTHR34265">
    <property type="entry name" value="TYPE III PANTOTHENATE KINASE"/>
    <property type="match status" value="1"/>
</dbReference>
<dbReference type="PANTHER" id="PTHR34265:SF1">
    <property type="entry name" value="TYPE III PANTOTHENATE KINASE"/>
    <property type="match status" value="1"/>
</dbReference>
<dbReference type="Pfam" id="PF03309">
    <property type="entry name" value="Pan_kinase"/>
    <property type="match status" value="1"/>
</dbReference>
<dbReference type="SUPFAM" id="SSF53067">
    <property type="entry name" value="Actin-like ATPase domain"/>
    <property type="match status" value="2"/>
</dbReference>
<accession>A1VGV6</accession>
<feature type="chain" id="PRO_1000054374" description="Type III pantothenate kinase">
    <location>
        <begin position="1"/>
        <end position="262"/>
    </location>
</feature>
<feature type="active site" description="Proton acceptor" evidence="1">
    <location>
        <position position="112"/>
    </location>
</feature>
<feature type="binding site" evidence="1">
    <location>
        <begin position="9"/>
        <end position="16"/>
    </location>
    <ligand>
        <name>ATP</name>
        <dbReference type="ChEBI" id="CHEBI:30616"/>
    </ligand>
</feature>
<feature type="binding site" evidence="1">
    <location>
        <position position="103"/>
    </location>
    <ligand>
        <name>substrate</name>
    </ligand>
</feature>
<feature type="binding site" evidence="1">
    <location>
        <begin position="110"/>
        <end position="113"/>
    </location>
    <ligand>
        <name>substrate</name>
    </ligand>
</feature>
<feature type="binding site" evidence="1">
    <location>
        <position position="134"/>
    </location>
    <ligand>
        <name>K(+)</name>
        <dbReference type="ChEBI" id="CHEBI:29103"/>
    </ligand>
</feature>
<feature type="binding site" evidence="1">
    <location>
        <position position="137"/>
    </location>
    <ligand>
        <name>ATP</name>
        <dbReference type="ChEBI" id="CHEBI:30616"/>
    </ligand>
</feature>
<feature type="binding site" evidence="1">
    <location>
        <position position="190"/>
    </location>
    <ligand>
        <name>substrate</name>
    </ligand>
</feature>
<gene>
    <name evidence="1" type="primary">coaX</name>
    <name type="ordered locus">Dvul_2660</name>
</gene>
<organism>
    <name type="scientific">Nitratidesulfovibrio vulgaris (strain DP4)</name>
    <name type="common">Desulfovibrio vulgaris</name>
    <dbReference type="NCBI Taxonomy" id="391774"/>
    <lineage>
        <taxon>Bacteria</taxon>
        <taxon>Pseudomonadati</taxon>
        <taxon>Thermodesulfobacteriota</taxon>
        <taxon>Desulfovibrionia</taxon>
        <taxon>Desulfovibrionales</taxon>
        <taxon>Desulfovibrionaceae</taxon>
        <taxon>Nitratidesulfovibrio</taxon>
    </lineage>
</organism>
<evidence type="ECO:0000255" key="1">
    <source>
        <dbReference type="HAMAP-Rule" id="MF_01274"/>
    </source>
</evidence>
<protein>
    <recommendedName>
        <fullName evidence="1">Type III pantothenate kinase</fullName>
        <ecNumber evidence="1">2.7.1.33</ecNumber>
    </recommendedName>
    <alternativeName>
        <fullName evidence="1">PanK-III</fullName>
    </alternativeName>
    <alternativeName>
        <fullName evidence="1">Pantothenic acid kinase</fullName>
    </alternativeName>
</protein>
<reference key="1">
    <citation type="journal article" date="2009" name="Environ. Microbiol.">
        <title>Contribution of mobile genetic elements to Desulfovibrio vulgaris genome plasticity.</title>
        <authorList>
            <person name="Walker C.B."/>
            <person name="Stolyar S."/>
            <person name="Chivian D."/>
            <person name="Pinel N."/>
            <person name="Gabster J.A."/>
            <person name="Dehal P.S."/>
            <person name="He Z."/>
            <person name="Yang Z.K."/>
            <person name="Yen H.C."/>
            <person name="Zhou J."/>
            <person name="Wall J.D."/>
            <person name="Hazen T.C."/>
            <person name="Arkin A.P."/>
            <person name="Stahl D.A."/>
        </authorList>
    </citation>
    <scope>NUCLEOTIDE SEQUENCE [LARGE SCALE GENOMIC DNA]</scope>
    <source>
        <strain>DP4</strain>
    </source>
</reference>
<keyword id="KW-0067">ATP-binding</keyword>
<keyword id="KW-0173">Coenzyme A biosynthesis</keyword>
<keyword id="KW-0963">Cytoplasm</keyword>
<keyword id="KW-0418">Kinase</keyword>
<keyword id="KW-0479">Metal-binding</keyword>
<keyword id="KW-0547">Nucleotide-binding</keyword>
<keyword id="KW-0630">Potassium</keyword>
<keyword id="KW-0808">Transferase</keyword>